<accession>P84656</accession>
<organism>
    <name type="scientific">Cyrtotria poduriformis</name>
    <name type="common">Cockroach</name>
    <dbReference type="NCBI Taxonomy" id="344688"/>
    <lineage>
        <taxon>Eukaryota</taxon>
        <taxon>Metazoa</taxon>
        <taxon>Ecdysozoa</taxon>
        <taxon>Arthropoda</taxon>
        <taxon>Hexapoda</taxon>
        <taxon>Insecta</taxon>
        <taxon>Pterygota</taxon>
        <taxon>Neoptera</taxon>
        <taxon>Polyneoptera</taxon>
        <taxon>Dictyoptera</taxon>
        <taxon>Blattodea</taxon>
        <taxon>Blaberoidea</taxon>
        <taxon>Blaberidae</taxon>
        <taxon>Perisphaerinae</taxon>
        <taxon>Cyrtotria</taxon>
    </lineage>
</organism>
<evidence type="ECO:0000255" key="1"/>
<evidence type="ECO:0000269" key="2">
    <source>
    </source>
</evidence>
<evidence type="ECO:0000269" key="3">
    <source ref="2"/>
</evidence>
<evidence type="ECO:0000305" key="4"/>
<comment type="function">
    <text evidence="4">Mediates visceral muscle contractile activity (myotropic activity).</text>
</comment>
<comment type="subcellular location">
    <subcellularLocation>
        <location evidence="4">Secreted</location>
    </subcellularLocation>
</comment>
<comment type="tissue specificity">
    <text evidence="3">Expressed in abdominal perisympathetic organs and abdominal ganglia.</text>
</comment>
<comment type="mass spectrometry" mass="1104.6" method="MALDI" evidence="3">
    <text>With amidation.</text>
</comment>
<comment type="similarity">
    <text evidence="1">Belongs to the periviscerokinin family.</text>
</comment>
<proteinExistence type="evidence at protein level"/>
<feature type="peptide" id="PRO_0000044243" description="Periviscerokinin-1">
    <location>
        <begin position="1"/>
        <end position="11"/>
    </location>
</feature>
<feature type="modified residue" description="Threonine amide" evidence="2 3">
    <location>
        <position position="11"/>
    </location>
</feature>
<keyword id="KW-0027">Amidation</keyword>
<keyword id="KW-0903">Direct protein sequencing</keyword>
<keyword id="KW-0527">Neuropeptide</keyword>
<keyword id="KW-0964">Secreted</keyword>
<reference key="1">
    <citation type="journal article" date="2009" name="BMC Evol. Biol.">
        <title>A proteomic approach for studying insect phylogeny: CAPA peptides of ancient insect taxa (Dictyoptera, Blattoptera) as a test case.</title>
        <authorList>
            <person name="Roth S."/>
            <person name="Fromm B."/>
            <person name="Gaede G."/>
            <person name="Predel R."/>
        </authorList>
    </citation>
    <scope>PROTEIN SEQUENCE</scope>
    <scope>AMIDATION AT THR-11</scope>
    <source>
        <tissue>Abdominal perisympathetic organs</tissue>
    </source>
</reference>
<reference evidence="4" key="2">
    <citation type="submission" date="2005-09" db="UniProtKB">
        <authorList>
            <person name="Predel R."/>
        </authorList>
    </citation>
    <scope>PROTEIN SEQUENCE</scope>
    <scope>TISSUE SPECIFICITY</scope>
    <scope>MASS SPECTROMETRY</scope>
    <scope>AMIDATION AT THR-11</scope>
    <source>
        <tissue>Abdominal perisympathetic organs</tissue>
    </source>
</reference>
<name>PVK1_CYRPO</name>
<sequence length="11" mass="1105">GSTGLIPFGRT</sequence>
<dbReference type="GO" id="GO:0005576">
    <property type="term" value="C:extracellular region"/>
    <property type="evidence" value="ECO:0007669"/>
    <property type="project" value="UniProtKB-SubCell"/>
</dbReference>
<dbReference type="GO" id="GO:0007218">
    <property type="term" value="P:neuropeptide signaling pathway"/>
    <property type="evidence" value="ECO:0007669"/>
    <property type="project" value="UniProtKB-KW"/>
</dbReference>
<dbReference type="InterPro" id="IPR013231">
    <property type="entry name" value="Periviscerokinin"/>
</dbReference>
<dbReference type="Pfam" id="PF08259">
    <property type="entry name" value="Periviscerokin"/>
    <property type="match status" value="1"/>
</dbReference>
<protein>
    <recommendedName>
        <fullName>Periviscerokinin-1</fullName>
        <shortName>CyrPo-PVK-1</shortName>
    </recommendedName>
</protein>